<evidence type="ECO:0000255" key="1">
    <source>
        <dbReference type="HAMAP-Rule" id="MF_00484"/>
    </source>
</evidence>
<organism>
    <name type="scientific">Escherichia coli O139:H28 (strain E24377A / ETEC)</name>
    <dbReference type="NCBI Taxonomy" id="331111"/>
    <lineage>
        <taxon>Bacteria</taxon>
        <taxon>Pseudomonadati</taxon>
        <taxon>Pseudomonadota</taxon>
        <taxon>Gammaproteobacteria</taxon>
        <taxon>Enterobacterales</taxon>
        <taxon>Enterobacteriaceae</taxon>
        <taxon>Escherichia</taxon>
    </lineage>
</organism>
<gene>
    <name evidence="1" type="primary">glgA</name>
    <name type="ordered locus">EcE24377A_3908</name>
</gene>
<comment type="function">
    <text evidence="1">Synthesizes alpha-1,4-glucan chains using ADP-glucose.</text>
</comment>
<comment type="catalytic activity">
    <reaction evidence="1">
        <text>[(1-&gt;4)-alpha-D-glucosyl](n) + ADP-alpha-D-glucose = [(1-&gt;4)-alpha-D-glucosyl](n+1) + ADP + H(+)</text>
        <dbReference type="Rhea" id="RHEA:18189"/>
        <dbReference type="Rhea" id="RHEA-COMP:9584"/>
        <dbReference type="Rhea" id="RHEA-COMP:9587"/>
        <dbReference type="ChEBI" id="CHEBI:15378"/>
        <dbReference type="ChEBI" id="CHEBI:15444"/>
        <dbReference type="ChEBI" id="CHEBI:57498"/>
        <dbReference type="ChEBI" id="CHEBI:456216"/>
        <dbReference type="EC" id="2.4.1.21"/>
    </reaction>
</comment>
<comment type="pathway">
    <text evidence="1">Glycan biosynthesis; glycogen biosynthesis.</text>
</comment>
<comment type="similarity">
    <text evidence="1">Belongs to the glycosyltransferase 1 family. Bacterial/plant glycogen synthase subfamily.</text>
</comment>
<name>GLGA_ECO24</name>
<keyword id="KW-0320">Glycogen biosynthesis</keyword>
<keyword id="KW-0328">Glycosyltransferase</keyword>
<keyword id="KW-1185">Reference proteome</keyword>
<keyword id="KW-0808">Transferase</keyword>
<accession>A7ZSW2</accession>
<reference key="1">
    <citation type="journal article" date="2008" name="J. Bacteriol.">
        <title>The pangenome structure of Escherichia coli: comparative genomic analysis of E. coli commensal and pathogenic isolates.</title>
        <authorList>
            <person name="Rasko D.A."/>
            <person name="Rosovitz M.J."/>
            <person name="Myers G.S.A."/>
            <person name="Mongodin E.F."/>
            <person name="Fricke W.F."/>
            <person name="Gajer P."/>
            <person name="Crabtree J."/>
            <person name="Sebaihia M."/>
            <person name="Thomson N.R."/>
            <person name="Chaudhuri R."/>
            <person name="Henderson I.R."/>
            <person name="Sperandio V."/>
            <person name="Ravel J."/>
        </authorList>
    </citation>
    <scope>NUCLEOTIDE SEQUENCE [LARGE SCALE GENOMIC DNA]</scope>
    <source>
        <strain>E24377A / ETEC</strain>
    </source>
</reference>
<sequence>MQVLHVCSEMFPLLKTGGLADVIGALPAAQIADGVDARVLLPAFPDIRRGVTDAQVVSRRDTFAGHITLLFGHYNGVGIYLIDAPHLYDRPGSPYHDTNLFAYTDNVLRFALLGWVGAEMASGLDPFWRPDVVHAHDWHAGLAPAYLAARGRPAKSVFTVHNLAYQGMFYAHHMNDIQLPWSFFNIHGLEFNGQISFLKAGLYYADHITAVSPTYAREITEPQFAYGMEGLLQQRHREGRLSGVLNGVDEKIWSPETDLLLASRYTRDTLEDKAENKRQLQIAMGLKVDDKVPLFAVVSRLTSQKGLDLVLEALPGLLEQGGQLALLGAGDPVLQEGFLAAAAEYPGQVGVQIGYHEAFSHRIMGGADVILVPSRFEPCGLTQLYGLKYGTLPLVRRTGGLADTVSDCSLENLADGVASGFVFEDSNAWSLLRAIRRAFVLWSRPSLWRFVQRQAMAMDFSWQVAAKSYRELYYRLK</sequence>
<dbReference type="EC" id="2.4.1.21" evidence="1"/>
<dbReference type="EMBL" id="CP000800">
    <property type="protein sequence ID" value="ABV20730.1"/>
    <property type="molecule type" value="Genomic_DNA"/>
</dbReference>
<dbReference type="RefSeq" id="WP_001197646.1">
    <property type="nucleotide sequence ID" value="NC_009801.1"/>
</dbReference>
<dbReference type="SMR" id="A7ZSW2"/>
<dbReference type="CAZy" id="GT5">
    <property type="family name" value="Glycosyltransferase Family 5"/>
</dbReference>
<dbReference type="GeneID" id="75202274"/>
<dbReference type="KEGG" id="ecw:EcE24377A_3908"/>
<dbReference type="HOGENOM" id="CLU_009583_18_2_6"/>
<dbReference type="UniPathway" id="UPA00164"/>
<dbReference type="Proteomes" id="UP000001122">
    <property type="component" value="Chromosome"/>
</dbReference>
<dbReference type="GO" id="GO:0005829">
    <property type="term" value="C:cytosol"/>
    <property type="evidence" value="ECO:0007669"/>
    <property type="project" value="TreeGrafter"/>
</dbReference>
<dbReference type="GO" id="GO:0009011">
    <property type="term" value="F:alpha-1,4-glucan glucosyltransferase (ADP-glucose donor) activity"/>
    <property type="evidence" value="ECO:0007669"/>
    <property type="project" value="UniProtKB-UniRule"/>
</dbReference>
<dbReference type="GO" id="GO:0004373">
    <property type="term" value="F:alpha-1,4-glucan glucosyltransferase (UDP-glucose donor) activity"/>
    <property type="evidence" value="ECO:0007669"/>
    <property type="project" value="InterPro"/>
</dbReference>
<dbReference type="GO" id="GO:0005978">
    <property type="term" value="P:glycogen biosynthetic process"/>
    <property type="evidence" value="ECO:0007669"/>
    <property type="project" value="UniProtKB-UniRule"/>
</dbReference>
<dbReference type="CDD" id="cd03791">
    <property type="entry name" value="GT5_Glycogen_synthase_DULL1-like"/>
    <property type="match status" value="1"/>
</dbReference>
<dbReference type="FunFam" id="3.40.50.2000:FF:000008">
    <property type="entry name" value="Glycogen synthase"/>
    <property type="match status" value="1"/>
</dbReference>
<dbReference type="FunFam" id="3.40.50.2000:FF:000011">
    <property type="entry name" value="Glycogen synthase"/>
    <property type="match status" value="1"/>
</dbReference>
<dbReference type="Gene3D" id="3.40.50.2000">
    <property type="entry name" value="Glycogen Phosphorylase B"/>
    <property type="match status" value="2"/>
</dbReference>
<dbReference type="HAMAP" id="MF_00484">
    <property type="entry name" value="Glycogen_synth"/>
    <property type="match status" value="1"/>
</dbReference>
<dbReference type="InterPro" id="IPR001296">
    <property type="entry name" value="Glyco_trans_1"/>
</dbReference>
<dbReference type="InterPro" id="IPR011835">
    <property type="entry name" value="GS/SS"/>
</dbReference>
<dbReference type="InterPro" id="IPR013534">
    <property type="entry name" value="Starch_synth_cat_dom"/>
</dbReference>
<dbReference type="NCBIfam" id="TIGR02095">
    <property type="entry name" value="glgA"/>
    <property type="match status" value="1"/>
</dbReference>
<dbReference type="NCBIfam" id="NF001899">
    <property type="entry name" value="PRK00654.1-2"/>
    <property type="match status" value="1"/>
</dbReference>
<dbReference type="PANTHER" id="PTHR45825:SF11">
    <property type="entry name" value="ALPHA AMYLASE DOMAIN-CONTAINING PROTEIN"/>
    <property type="match status" value="1"/>
</dbReference>
<dbReference type="PANTHER" id="PTHR45825">
    <property type="entry name" value="GRANULE-BOUND STARCH SYNTHASE 1, CHLOROPLASTIC/AMYLOPLASTIC"/>
    <property type="match status" value="1"/>
</dbReference>
<dbReference type="Pfam" id="PF08323">
    <property type="entry name" value="Glyco_transf_5"/>
    <property type="match status" value="1"/>
</dbReference>
<dbReference type="Pfam" id="PF00534">
    <property type="entry name" value="Glycos_transf_1"/>
    <property type="match status" value="1"/>
</dbReference>
<dbReference type="SUPFAM" id="SSF53756">
    <property type="entry name" value="UDP-Glycosyltransferase/glycogen phosphorylase"/>
    <property type="match status" value="1"/>
</dbReference>
<feature type="chain" id="PRO_1000060430" description="Glycogen synthase">
    <location>
        <begin position="1"/>
        <end position="477"/>
    </location>
</feature>
<feature type="binding site" evidence="1">
    <location>
        <position position="15"/>
    </location>
    <ligand>
        <name>ADP-alpha-D-glucose</name>
        <dbReference type="ChEBI" id="CHEBI:57498"/>
    </ligand>
</feature>
<proteinExistence type="inferred from homology"/>
<protein>
    <recommendedName>
        <fullName evidence="1">Glycogen synthase</fullName>
        <ecNumber evidence="1">2.4.1.21</ecNumber>
    </recommendedName>
    <alternativeName>
        <fullName evidence="1">Starch [bacterial glycogen] synthase</fullName>
    </alternativeName>
</protein>